<comment type="function">
    <text evidence="1">As a component of the mitochondrial large ribosomal subunit, plays a role in mitochondrial translation. When present in mitochondria as a free protein not associated with the ribosome, associates with mitochondrial RNA polymerase POLRMT to activate transcription. Required for POLRMT stability.</text>
</comment>
<comment type="subunit">
    <text evidence="1">Component of the mitochondrial ribosome large subunit (39S) which comprises a 16S rRNA and about 50 distinct proteins (By similarity). Interacts with NOA1.</text>
</comment>
<comment type="subcellular location">
    <subcellularLocation>
        <location evidence="1">Mitochondrion matrix</location>
    </subcellularLocation>
</comment>
<comment type="PTM">
    <text evidence="1">Two mature forms are produced by differential two-step proteolytic cleavage. Cleaved by the mitochondrial processing protease to produce the long mature form and subsequently by the mitochondrial intermediate protease to produce the short mature form.</text>
</comment>
<comment type="PTM">
    <text evidence="1">In the presence of CUL3, undergoes 'Lys-63'-linked ubiquitination at Lys-153 which results in proteasomal degradation.</text>
</comment>
<comment type="similarity">
    <text evidence="3">Belongs to the bacterial ribosomal protein bL12 family.</text>
</comment>
<evidence type="ECO:0000250" key="1">
    <source>
        <dbReference type="UniProtKB" id="P52815"/>
    </source>
</evidence>
<evidence type="ECO:0000256" key="2">
    <source>
        <dbReference type="SAM" id="MobiDB-lite"/>
    </source>
</evidence>
<evidence type="ECO:0000305" key="3"/>
<evidence type="ECO:0000305" key="4">
    <source>
    </source>
</evidence>
<evidence type="ECO:0007744" key="5">
    <source>
    </source>
</evidence>
<evidence type="ECO:0007744" key="6">
    <source>
    </source>
</evidence>
<gene>
    <name type="primary">Mrpl12</name>
    <name type="synonym">Rpml12</name>
</gene>
<protein>
    <recommendedName>
        <fullName evidence="3">Large ribosomal subunit protein bL12m</fullName>
    </recommendedName>
    <alternativeName>
        <fullName>39S ribosomal protein L12, mitochondrial</fullName>
        <shortName>L12mt</shortName>
        <shortName>MRP-L12</shortName>
    </alternativeName>
    <component>
        <recommendedName>
            <fullName evidence="1">Large ribosomal subunit protein bL12m, long mature form</fullName>
        </recommendedName>
    </component>
    <component>
        <recommendedName>
            <fullName evidence="1">Large ribosomal subunit protein bL12m, short mature form</fullName>
        </recommendedName>
    </component>
</protein>
<name>RM12_MOUSE</name>
<proteinExistence type="evidence at protein level"/>
<feature type="transit peptide" description="Mitochondrion" evidence="4">
    <location>
        <begin position="1"/>
        <end position="38"/>
    </location>
</feature>
<feature type="chain" id="PRO_0000461650" description="Large ribosomal subunit protein bL12m, long mature form" evidence="1">
    <location>
        <begin position="39"/>
        <end position="201"/>
    </location>
</feature>
<feature type="chain" id="PRO_0000030459" description="Large ribosomal subunit protein bL12m, short mature form" evidence="1">
    <location>
        <begin position="46"/>
        <end position="201"/>
    </location>
</feature>
<feature type="region of interest" description="Disordered" evidence="2">
    <location>
        <begin position="37"/>
        <end position="60"/>
    </location>
</feature>
<feature type="region of interest" description="Disordered" evidence="2">
    <location>
        <begin position="109"/>
        <end position="130"/>
    </location>
</feature>
<feature type="modified residue" description="N6-acetyllysine" evidence="1">
    <location>
        <position position="128"/>
    </location>
</feature>
<feature type="modified residue" description="N6-acetyllysine" evidence="5">
    <location>
        <position position="141"/>
    </location>
</feature>
<feature type="modified residue" description="N6-acetyllysine" evidence="1">
    <location>
        <position position="145"/>
    </location>
</feature>
<feature type="modified residue" description="N6-acetyllysine" evidence="1">
    <location>
        <position position="147"/>
    </location>
</feature>
<feature type="modified residue" description="N6-acetyllysine; alternate" evidence="1">
    <location>
        <position position="153"/>
    </location>
</feature>
<feature type="modified residue" description="N6-succinyllysine; alternate" evidence="6">
    <location>
        <position position="153"/>
    </location>
</feature>
<feature type="modified residue" description="N6-succinyllysine" evidence="6">
    <location>
        <position position="165"/>
    </location>
</feature>
<feature type="modified residue" description="N6-acetyllysine" evidence="1">
    <location>
        <position position="166"/>
    </location>
</feature>
<feature type="modified residue" description="N6-acetyllysine" evidence="1">
    <location>
        <position position="176"/>
    </location>
</feature>
<feature type="modified residue" description="N6-acetyllysine; alternate" evidence="1">
    <location>
        <position position="181"/>
    </location>
</feature>
<feature type="modified residue" description="N6-succinyllysine; alternate" evidence="6">
    <location>
        <position position="181"/>
    </location>
</feature>
<feature type="modified residue" description="N6-acetyllysine" evidence="1">
    <location>
        <position position="188"/>
    </location>
</feature>
<feature type="cross-link" description="Glycyl lysine isopeptide (Lys-Gly) (interchain with G-Cter in ubiquitin)" evidence="1">
    <location>
        <position position="153"/>
    </location>
</feature>
<feature type="sequence conflict" description="In Ref. 1; BAB23955." evidence="3" ref="1">
    <original>RCLWGPRLGLR</original>
    <variation>AACGGHGLDSW</variation>
    <location>
        <begin position="8"/>
        <end position="18"/>
    </location>
</feature>
<reference key="1">
    <citation type="journal article" date="2005" name="Science">
        <title>The transcriptional landscape of the mammalian genome.</title>
        <authorList>
            <person name="Carninci P."/>
            <person name="Kasukawa T."/>
            <person name="Katayama S."/>
            <person name="Gough J."/>
            <person name="Frith M.C."/>
            <person name="Maeda N."/>
            <person name="Oyama R."/>
            <person name="Ravasi T."/>
            <person name="Lenhard B."/>
            <person name="Wells C."/>
            <person name="Kodzius R."/>
            <person name="Shimokawa K."/>
            <person name="Bajic V.B."/>
            <person name="Brenner S.E."/>
            <person name="Batalov S."/>
            <person name="Forrest A.R."/>
            <person name="Zavolan M."/>
            <person name="Davis M.J."/>
            <person name="Wilming L.G."/>
            <person name="Aidinis V."/>
            <person name="Allen J.E."/>
            <person name="Ambesi-Impiombato A."/>
            <person name="Apweiler R."/>
            <person name="Aturaliya R.N."/>
            <person name="Bailey T.L."/>
            <person name="Bansal M."/>
            <person name="Baxter L."/>
            <person name="Beisel K.W."/>
            <person name="Bersano T."/>
            <person name="Bono H."/>
            <person name="Chalk A.M."/>
            <person name="Chiu K.P."/>
            <person name="Choudhary V."/>
            <person name="Christoffels A."/>
            <person name="Clutterbuck D.R."/>
            <person name="Crowe M.L."/>
            <person name="Dalla E."/>
            <person name="Dalrymple B.P."/>
            <person name="de Bono B."/>
            <person name="Della Gatta G."/>
            <person name="di Bernardo D."/>
            <person name="Down T."/>
            <person name="Engstrom P."/>
            <person name="Fagiolini M."/>
            <person name="Faulkner G."/>
            <person name="Fletcher C.F."/>
            <person name="Fukushima T."/>
            <person name="Furuno M."/>
            <person name="Futaki S."/>
            <person name="Gariboldi M."/>
            <person name="Georgii-Hemming P."/>
            <person name="Gingeras T.R."/>
            <person name="Gojobori T."/>
            <person name="Green R.E."/>
            <person name="Gustincich S."/>
            <person name="Harbers M."/>
            <person name="Hayashi Y."/>
            <person name="Hensch T.K."/>
            <person name="Hirokawa N."/>
            <person name="Hill D."/>
            <person name="Huminiecki L."/>
            <person name="Iacono M."/>
            <person name="Ikeo K."/>
            <person name="Iwama A."/>
            <person name="Ishikawa T."/>
            <person name="Jakt M."/>
            <person name="Kanapin A."/>
            <person name="Katoh M."/>
            <person name="Kawasawa Y."/>
            <person name="Kelso J."/>
            <person name="Kitamura H."/>
            <person name="Kitano H."/>
            <person name="Kollias G."/>
            <person name="Krishnan S.P."/>
            <person name="Kruger A."/>
            <person name="Kummerfeld S.K."/>
            <person name="Kurochkin I.V."/>
            <person name="Lareau L.F."/>
            <person name="Lazarevic D."/>
            <person name="Lipovich L."/>
            <person name="Liu J."/>
            <person name="Liuni S."/>
            <person name="McWilliam S."/>
            <person name="Madan Babu M."/>
            <person name="Madera M."/>
            <person name="Marchionni L."/>
            <person name="Matsuda H."/>
            <person name="Matsuzawa S."/>
            <person name="Miki H."/>
            <person name="Mignone F."/>
            <person name="Miyake S."/>
            <person name="Morris K."/>
            <person name="Mottagui-Tabar S."/>
            <person name="Mulder N."/>
            <person name="Nakano N."/>
            <person name="Nakauchi H."/>
            <person name="Ng P."/>
            <person name="Nilsson R."/>
            <person name="Nishiguchi S."/>
            <person name="Nishikawa S."/>
            <person name="Nori F."/>
            <person name="Ohara O."/>
            <person name="Okazaki Y."/>
            <person name="Orlando V."/>
            <person name="Pang K.C."/>
            <person name="Pavan W.J."/>
            <person name="Pavesi G."/>
            <person name="Pesole G."/>
            <person name="Petrovsky N."/>
            <person name="Piazza S."/>
            <person name="Reed J."/>
            <person name="Reid J.F."/>
            <person name="Ring B.Z."/>
            <person name="Ringwald M."/>
            <person name="Rost B."/>
            <person name="Ruan Y."/>
            <person name="Salzberg S.L."/>
            <person name="Sandelin A."/>
            <person name="Schneider C."/>
            <person name="Schoenbach C."/>
            <person name="Sekiguchi K."/>
            <person name="Semple C.A."/>
            <person name="Seno S."/>
            <person name="Sessa L."/>
            <person name="Sheng Y."/>
            <person name="Shibata Y."/>
            <person name="Shimada H."/>
            <person name="Shimada K."/>
            <person name="Silva D."/>
            <person name="Sinclair B."/>
            <person name="Sperling S."/>
            <person name="Stupka E."/>
            <person name="Sugiura K."/>
            <person name="Sultana R."/>
            <person name="Takenaka Y."/>
            <person name="Taki K."/>
            <person name="Tammoja K."/>
            <person name="Tan S.L."/>
            <person name="Tang S."/>
            <person name="Taylor M.S."/>
            <person name="Tegner J."/>
            <person name="Teichmann S.A."/>
            <person name="Ueda H.R."/>
            <person name="van Nimwegen E."/>
            <person name="Verardo R."/>
            <person name="Wei C.L."/>
            <person name="Yagi K."/>
            <person name="Yamanishi H."/>
            <person name="Zabarovsky E."/>
            <person name="Zhu S."/>
            <person name="Zimmer A."/>
            <person name="Hide W."/>
            <person name="Bult C."/>
            <person name="Grimmond S.M."/>
            <person name="Teasdale R.D."/>
            <person name="Liu E.T."/>
            <person name="Brusic V."/>
            <person name="Quackenbush J."/>
            <person name="Wahlestedt C."/>
            <person name="Mattick J.S."/>
            <person name="Hume D.A."/>
            <person name="Kai C."/>
            <person name="Sasaki D."/>
            <person name="Tomaru Y."/>
            <person name="Fukuda S."/>
            <person name="Kanamori-Katayama M."/>
            <person name="Suzuki M."/>
            <person name="Aoki J."/>
            <person name="Arakawa T."/>
            <person name="Iida J."/>
            <person name="Imamura K."/>
            <person name="Itoh M."/>
            <person name="Kato T."/>
            <person name="Kawaji H."/>
            <person name="Kawagashira N."/>
            <person name="Kawashima T."/>
            <person name="Kojima M."/>
            <person name="Kondo S."/>
            <person name="Konno H."/>
            <person name="Nakano K."/>
            <person name="Ninomiya N."/>
            <person name="Nishio T."/>
            <person name="Okada M."/>
            <person name="Plessy C."/>
            <person name="Shibata K."/>
            <person name="Shiraki T."/>
            <person name="Suzuki S."/>
            <person name="Tagami M."/>
            <person name="Waki K."/>
            <person name="Watahiki A."/>
            <person name="Okamura-Oho Y."/>
            <person name="Suzuki H."/>
            <person name="Kawai J."/>
            <person name="Hayashizaki Y."/>
        </authorList>
    </citation>
    <scope>NUCLEOTIDE SEQUENCE [LARGE SCALE MRNA]</scope>
    <source>
        <strain>C57BL/6J</strain>
        <tissue>Cerebellum</tissue>
        <tissue>Liver</tissue>
        <tissue>Medulla oblongata</tissue>
    </source>
</reference>
<reference key="2">
    <citation type="journal article" date="2009" name="PLoS Biol.">
        <title>Lineage-specific biology revealed by a finished genome assembly of the mouse.</title>
        <authorList>
            <person name="Church D.M."/>
            <person name="Goodstadt L."/>
            <person name="Hillier L.W."/>
            <person name="Zody M.C."/>
            <person name="Goldstein S."/>
            <person name="She X."/>
            <person name="Bult C.J."/>
            <person name="Agarwala R."/>
            <person name="Cherry J.L."/>
            <person name="DiCuccio M."/>
            <person name="Hlavina W."/>
            <person name="Kapustin Y."/>
            <person name="Meric P."/>
            <person name="Maglott D."/>
            <person name="Birtle Z."/>
            <person name="Marques A.C."/>
            <person name="Graves T."/>
            <person name="Zhou S."/>
            <person name="Teague B."/>
            <person name="Potamousis K."/>
            <person name="Churas C."/>
            <person name="Place M."/>
            <person name="Herschleb J."/>
            <person name="Runnheim R."/>
            <person name="Forrest D."/>
            <person name="Amos-Landgraf J."/>
            <person name="Schwartz D.C."/>
            <person name="Cheng Z."/>
            <person name="Lindblad-Toh K."/>
            <person name="Eichler E.E."/>
            <person name="Ponting C.P."/>
        </authorList>
    </citation>
    <scope>NUCLEOTIDE SEQUENCE [LARGE SCALE GENOMIC DNA]</scope>
    <source>
        <strain>C57BL/6J</strain>
    </source>
</reference>
<reference key="3">
    <citation type="journal article" date="2004" name="Genome Res.">
        <title>The status, quality, and expansion of the NIH full-length cDNA project: the Mammalian Gene Collection (MGC).</title>
        <authorList>
            <consortium name="The MGC Project Team"/>
        </authorList>
    </citation>
    <scope>NUCLEOTIDE SEQUENCE [LARGE SCALE MRNA]</scope>
    <source>
        <strain>FVB/N</strain>
        <tissue>Colon</tissue>
    </source>
</reference>
<reference key="4">
    <citation type="submission" date="2007-07" db="UniProtKB">
        <authorList>
            <person name="Lubec G."/>
            <person name="Yang J.W."/>
            <person name="Zigmond M."/>
        </authorList>
    </citation>
    <scope>PROTEIN SEQUENCE OF 154-165</scope>
    <source>
        <tissue>Brain</tissue>
    </source>
</reference>
<reference key="5">
    <citation type="journal article" date="2010" name="Cell">
        <title>A tissue-specific atlas of mouse protein phosphorylation and expression.</title>
        <authorList>
            <person name="Huttlin E.L."/>
            <person name="Jedrychowski M.P."/>
            <person name="Elias J.E."/>
            <person name="Goswami T."/>
            <person name="Rad R."/>
            <person name="Beausoleil S.A."/>
            <person name="Villen J."/>
            <person name="Haas W."/>
            <person name="Sowa M.E."/>
            <person name="Gygi S.P."/>
        </authorList>
    </citation>
    <scope>IDENTIFICATION BY MASS SPECTROMETRY [LARGE SCALE ANALYSIS]</scope>
    <source>
        <tissue>Brain</tissue>
        <tissue>Brown adipose tissue</tissue>
        <tissue>Heart</tissue>
        <tissue>Kidney</tissue>
        <tissue>Liver</tissue>
        <tissue>Lung</tissue>
        <tissue>Pancreas</tissue>
        <tissue>Spleen</tissue>
        <tissue>Testis</tissue>
    </source>
</reference>
<reference key="6">
    <citation type="journal article" date="2013" name="Mol. Cell">
        <title>SIRT5-mediated lysine desuccinylation impacts diverse metabolic pathways.</title>
        <authorList>
            <person name="Park J."/>
            <person name="Chen Y."/>
            <person name="Tishkoff D.X."/>
            <person name="Peng C."/>
            <person name="Tan M."/>
            <person name="Dai L."/>
            <person name="Xie Z."/>
            <person name="Zhang Y."/>
            <person name="Zwaans B.M."/>
            <person name="Skinner M.E."/>
            <person name="Lombard D.B."/>
            <person name="Zhao Y."/>
        </authorList>
    </citation>
    <scope>SUCCINYLATION [LARGE SCALE ANALYSIS] AT LYS-153; LYS-165 AND LYS-181</scope>
    <scope>IDENTIFICATION BY MASS SPECTROMETRY [LARGE SCALE ANALYSIS]</scope>
    <source>
        <tissue>Liver</tissue>
    </source>
</reference>
<reference key="7">
    <citation type="journal article" date="2013" name="Proc. Natl. Acad. Sci. U.S.A.">
        <title>Label-free quantitative proteomics of the lysine acetylome in mitochondria identifies substrates of SIRT3 in metabolic pathways.</title>
        <authorList>
            <person name="Rardin M.J."/>
            <person name="Newman J.C."/>
            <person name="Held J.M."/>
            <person name="Cusack M.P."/>
            <person name="Sorensen D.J."/>
            <person name="Li B."/>
            <person name="Schilling B."/>
            <person name="Mooney S.D."/>
            <person name="Kahn C.R."/>
            <person name="Verdin E."/>
            <person name="Gibson B.W."/>
        </authorList>
    </citation>
    <scope>ACETYLATION [LARGE SCALE ANALYSIS] AT LYS-141</scope>
    <scope>IDENTIFICATION BY MASS SPECTROMETRY [LARGE SCALE ANALYSIS]</scope>
    <source>
        <tissue>Liver</tissue>
    </source>
</reference>
<sequence length="201" mass="21708">MLPVAASRCLWGPRLGLRGAALRLARQQMPSVCAARQLRSSSHRRSEALAGAPLDNAPKEYPPKIQQLVQDIASLTLLEISDLNELLKKTLKIQDVGLMPMGGMVPGPVSAAAPASEAAEEEDVPKQKERTHFTVRLTEAKPVDKVKLIKEIKNYVQGINLVQAKKLVESLPQEIKANVAKAEAEKIKAALEAVGGTVVLE</sequence>
<keyword id="KW-0007">Acetylation</keyword>
<keyword id="KW-0903">Direct protein sequencing</keyword>
<keyword id="KW-1017">Isopeptide bond</keyword>
<keyword id="KW-0496">Mitochondrion</keyword>
<keyword id="KW-1185">Reference proteome</keyword>
<keyword id="KW-0687">Ribonucleoprotein</keyword>
<keyword id="KW-0689">Ribosomal protein</keyword>
<keyword id="KW-0809">Transit peptide</keyword>
<keyword id="KW-0832">Ubl conjugation</keyword>
<organism>
    <name type="scientific">Mus musculus</name>
    <name type="common">Mouse</name>
    <dbReference type="NCBI Taxonomy" id="10090"/>
    <lineage>
        <taxon>Eukaryota</taxon>
        <taxon>Metazoa</taxon>
        <taxon>Chordata</taxon>
        <taxon>Craniata</taxon>
        <taxon>Vertebrata</taxon>
        <taxon>Euteleostomi</taxon>
        <taxon>Mammalia</taxon>
        <taxon>Eutheria</taxon>
        <taxon>Euarchontoglires</taxon>
        <taxon>Glires</taxon>
        <taxon>Rodentia</taxon>
        <taxon>Myomorpha</taxon>
        <taxon>Muroidea</taxon>
        <taxon>Muridae</taxon>
        <taxon>Murinae</taxon>
        <taxon>Mus</taxon>
        <taxon>Mus</taxon>
    </lineage>
</organism>
<dbReference type="EMBL" id="AK005328">
    <property type="protein sequence ID" value="BAB23955.1"/>
    <property type="molecule type" value="mRNA"/>
</dbReference>
<dbReference type="EMBL" id="AK028168">
    <property type="protein sequence ID" value="BAC25787.1"/>
    <property type="molecule type" value="mRNA"/>
</dbReference>
<dbReference type="EMBL" id="AK134816">
    <property type="protein sequence ID" value="BAE22297.1"/>
    <property type="molecule type" value="mRNA"/>
</dbReference>
<dbReference type="EMBL" id="AK166969">
    <property type="protein sequence ID" value="BAE39152.1"/>
    <property type="molecule type" value="mRNA"/>
</dbReference>
<dbReference type="EMBL" id="AK168337">
    <property type="protein sequence ID" value="BAE40275.1"/>
    <property type="molecule type" value="mRNA"/>
</dbReference>
<dbReference type="EMBL" id="AL669855">
    <property type="status" value="NOT_ANNOTATED_CDS"/>
    <property type="molecule type" value="Genomic_DNA"/>
</dbReference>
<dbReference type="EMBL" id="BC005712">
    <property type="protein sequence ID" value="AAH05712.1"/>
    <property type="molecule type" value="mRNA"/>
</dbReference>
<dbReference type="EMBL" id="BC019565">
    <property type="protein sequence ID" value="AAH19565.1"/>
    <property type="molecule type" value="mRNA"/>
</dbReference>
<dbReference type="CCDS" id="CCDS25737.1"/>
<dbReference type="RefSeq" id="NP_081480.2">
    <property type="nucleotide sequence ID" value="NM_027204.2"/>
</dbReference>
<dbReference type="SMR" id="Q9DB15"/>
<dbReference type="BioGRID" id="207875">
    <property type="interactions" value="29"/>
</dbReference>
<dbReference type="ComplexPortal" id="CPX-5302">
    <property type="entry name" value="39S mitochondrial large ribosomal subunit"/>
</dbReference>
<dbReference type="FunCoup" id="Q9DB15">
    <property type="interactions" value="1794"/>
</dbReference>
<dbReference type="IntAct" id="Q9DB15">
    <property type="interactions" value="3"/>
</dbReference>
<dbReference type="MINT" id="Q9DB15"/>
<dbReference type="STRING" id="10090.ENSMUSP00000044417"/>
<dbReference type="iPTMnet" id="Q9DB15"/>
<dbReference type="PhosphoSitePlus" id="Q9DB15"/>
<dbReference type="jPOST" id="Q9DB15"/>
<dbReference type="PaxDb" id="10090-ENSMUSP00000044417"/>
<dbReference type="PeptideAtlas" id="Q9DB15"/>
<dbReference type="ProteomicsDB" id="301602"/>
<dbReference type="Pumba" id="Q9DB15"/>
<dbReference type="Antibodypedia" id="60242">
    <property type="antibodies" value="237 antibodies from 30 providers"/>
</dbReference>
<dbReference type="DNASU" id="56282"/>
<dbReference type="Ensembl" id="ENSMUST00000043627.8">
    <property type="protein sequence ID" value="ENSMUSP00000044417.8"/>
    <property type="gene ID" value="ENSMUSG00000039640.8"/>
</dbReference>
<dbReference type="GeneID" id="56282"/>
<dbReference type="KEGG" id="mmu:56282"/>
<dbReference type="UCSC" id="uc007mta.1">
    <property type="organism name" value="mouse"/>
</dbReference>
<dbReference type="AGR" id="MGI:1926273"/>
<dbReference type="CTD" id="6182"/>
<dbReference type="MGI" id="MGI:1926273">
    <property type="gene designation" value="Mrpl12"/>
</dbReference>
<dbReference type="VEuPathDB" id="HostDB:ENSMUSG00000039640"/>
<dbReference type="eggNOG" id="KOG1715">
    <property type="taxonomic scope" value="Eukaryota"/>
</dbReference>
<dbReference type="GeneTree" id="ENSGT00390000000190"/>
<dbReference type="HOGENOM" id="CLU_086499_0_2_1"/>
<dbReference type="InParanoid" id="Q9DB15"/>
<dbReference type="OMA" id="LEDKWGV"/>
<dbReference type="OrthoDB" id="250175at2759"/>
<dbReference type="PhylomeDB" id="Q9DB15"/>
<dbReference type="TreeFam" id="TF105997"/>
<dbReference type="Reactome" id="R-MMU-5389840">
    <property type="pathway name" value="Mitochondrial translation elongation"/>
</dbReference>
<dbReference type="Reactome" id="R-MMU-5419276">
    <property type="pathway name" value="Mitochondrial translation termination"/>
</dbReference>
<dbReference type="Reactome" id="R-MMU-9837999">
    <property type="pathway name" value="Mitochondrial protein degradation"/>
</dbReference>
<dbReference type="BioGRID-ORCS" id="56282">
    <property type="hits" value="28 hits in 79 CRISPR screens"/>
</dbReference>
<dbReference type="ChiTaRS" id="Mrpl12">
    <property type="organism name" value="mouse"/>
</dbReference>
<dbReference type="PRO" id="PR:Q9DB15"/>
<dbReference type="Proteomes" id="UP000000589">
    <property type="component" value="Chromosome 11"/>
</dbReference>
<dbReference type="RNAct" id="Q9DB15">
    <property type="molecule type" value="protein"/>
</dbReference>
<dbReference type="Bgee" id="ENSMUSG00000039640">
    <property type="expression patterns" value="Expressed in floor plate of midbrain and 265 other cell types or tissues"/>
</dbReference>
<dbReference type="GO" id="GO:0005743">
    <property type="term" value="C:mitochondrial inner membrane"/>
    <property type="evidence" value="ECO:0000303"/>
    <property type="project" value="ComplexPortal"/>
</dbReference>
<dbReference type="GO" id="GO:0005762">
    <property type="term" value="C:mitochondrial large ribosomal subunit"/>
    <property type="evidence" value="ECO:0000250"/>
    <property type="project" value="UniProtKB"/>
</dbReference>
<dbReference type="GO" id="GO:0005759">
    <property type="term" value="C:mitochondrial matrix"/>
    <property type="evidence" value="ECO:0000250"/>
    <property type="project" value="UniProtKB"/>
</dbReference>
<dbReference type="GO" id="GO:0005761">
    <property type="term" value="C:mitochondrial ribosome"/>
    <property type="evidence" value="ECO:0000250"/>
    <property type="project" value="MGI"/>
</dbReference>
<dbReference type="GO" id="GO:0005739">
    <property type="term" value="C:mitochondrion"/>
    <property type="evidence" value="ECO:0007005"/>
    <property type="project" value="MGI"/>
</dbReference>
<dbReference type="GO" id="GO:0003735">
    <property type="term" value="F:structural constituent of ribosome"/>
    <property type="evidence" value="ECO:0007669"/>
    <property type="project" value="InterPro"/>
</dbReference>
<dbReference type="GO" id="GO:0006390">
    <property type="term" value="P:mitochondrial transcription"/>
    <property type="evidence" value="ECO:0007669"/>
    <property type="project" value="Ensembl"/>
</dbReference>
<dbReference type="GO" id="GO:0032543">
    <property type="term" value="P:mitochondrial translation"/>
    <property type="evidence" value="ECO:0000303"/>
    <property type="project" value="ComplexPortal"/>
</dbReference>
<dbReference type="GO" id="GO:0045893">
    <property type="term" value="P:positive regulation of DNA-templated transcription"/>
    <property type="evidence" value="ECO:0007669"/>
    <property type="project" value="Ensembl"/>
</dbReference>
<dbReference type="FunFam" id="1.20.5.710:FF:000006">
    <property type="entry name" value="39S ribosomal protein L12, mitochondrial"/>
    <property type="match status" value="1"/>
</dbReference>
<dbReference type="FunFam" id="3.30.1390.10:FF:000001">
    <property type="entry name" value="50S ribosomal protein L7/L12"/>
    <property type="match status" value="1"/>
</dbReference>
<dbReference type="Gene3D" id="3.30.1390.10">
    <property type="match status" value="1"/>
</dbReference>
<dbReference type="Gene3D" id="1.20.5.710">
    <property type="entry name" value="Single helix bin"/>
    <property type="match status" value="1"/>
</dbReference>
<dbReference type="HAMAP" id="MF_00368">
    <property type="entry name" value="Ribosomal_bL12"/>
    <property type="match status" value="1"/>
</dbReference>
<dbReference type="InterPro" id="IPR000206">
    <property type="entry name" value="Ribosomal_bL12"/>
</dbReference>
<dbReference type="InterPro" id="IPR013823">
    <property type="entry name" value="Ribosomal_bL12_C"/>
</dbReference>
<dbReference type="InterPro" id="IPR014719">
    <property type="entry name" value="Ribosomal_bL12_C/ClpS-like"/>
</dbReference>
<dbReference type="InterPro" id="IPR008932">
    <property type="entry name" value="Ribosomal_bL12_oligo"/>
</dbReference>
<dbReference type="InterPro" id="IPR036235">
    <property type="entry name" value="Ribosomal_bL12_oligo_N_sf"/>
</dbReference>
<dbReference type="PANTHER" id="PTHR45987">
    <property type="entry name" value="39S RIBOSOMAL PROTEIN L12"/>
    <property type="match status" value="1"/>
</dbReference>
<dbReference type="PANTHER" id="PTHR45987:SF4">
    <property type="entry name" value="LARGE RIBOSOMAL SUBUNIT PROTEIN BL12M"/>
    <property type="match status" value="1"/>
</dbReference>
<dbReference type="Pfam" id="PF00542">
    <property type="entry name" value="Ribosomal_L12"/>
    <property type="match status" value="1"/>
</dbReference>
<dbReference type="Pfam" id="PF16320">
    <property type="entry name" value="Ribosomal_L12_N"/>
    <property type="match status" value="1"/>
</dbReference>
<dbReference type="SUPFAM" id="SSF54736">
    <property type="entry name" value="ClpS-like"/>
    <property type="match status" value="1"/>
</dbReference>
<dbReference type="SUPFAM" id="SSF48300">
    <property type="entry name" value="Ribosomal protein L7/12, oligomerisation (N-terminal) domain"/>
    <property type="match status" value="1"/>
</dbReference>
<accession>Q9DB15</accession>
<accession>B1ATZ3</accession>
<accession>Q3TKJ3</accession>
<accession>Q99JS8</accession>